<gene>
    <name evidence="4" type="primary">cas13a</name>
</gene>
<name>CS13A_LACNK</name>
<organism>
    <name type="scientific">Lachnospiraceae bacterium (strain NK4A179)</name>
    <dbReference type="NCBI Taxonomy" id="877424"/>
    <lineage>
        <taxon>Bacteria</taxon>
        <taxon>Bacillati</taxon>
        <taxon>Bacillota</taxon>
        <taxon>Clostridia</taxon>
        <taxon>Lachnospirales</taxon>
        <taxon>Lachnospiraceae</taxon>
    </lineage>
</organism>
<proteinExistence type="evidence at protein level"/>
<protein>
    <recommendedName>
        <fullName evidence="4">CRISPR-associated endoribonuclease Cas13a</fullName>
        <shortName>EndoRNase</shortName>
        <ecNumber>3.1.-.-</ecNumber>
    </recommendedName>
    <alternativeName>
        <fullName evidence="4">LbaCas13a</fullName>
    </alternativeName>
</protein>
<sequence>MKISKVREENRGAKLTVNAKTAVVSENRSQEGILYNDPSRYGKSRKNDEDRDRYIESRLKSSGKLYRIFNEDKNKRETDELQWFLSEIVKKINRRNGLVLSDMLSVDDRAFEKAFEKYAELSYTNRRNKVSGSPAFETCGVDAATAERLKGIISETNFINRIKNNIDNKVSEDIIDRIIAKYLKKSLCRERVKRGLKKLLMNAFDLPYSDPDIDVQRDFIDYVLEDFYHVRAKSQVSRSIKNMNMPVQPEGDGKFAITVSKGGTESGNKRSAEKEAFKKFLSDYASLDERVRDDMLRRMRRLVVLYFYGSDDSKLSDVNEKFDVWEDHAARRVDNREFIKLPLENKLANGKTDKDAERIRKNTVKELYRNQNIGCYRQAVKAVEEDNNGRYFDDKMLNMFFIHRIEYGVEKIYANLKQVTEFKARTGYLSEKIWKDLINYISIKYIAMGKAVYNYAMDELNASDKKEIELGKISEEYLSGISSFDYELIKAEEMLQRETAVYVAFAARHLSSQTVELDSENSDFLLLKPKGTMDKNDKNKLASNNILNFLKDKETLRDTILQYFGGHSLWTDFPFDKYLAGGKDDVDFLTDLKDVIYSMRNDSFHYATENHNNGKWNKELISAMFEHETERMTVVMKDKFYSNNLPMFYKNDDLKKLLIDLYKDNVERASQVPSFNKVFVRKNFPALVRDKDNLGIELDLKADADKGENELKFYNALYYMFKEIYYNAFLNDKNVRERFITKATKVADNYDRNKERNLKDRIKSAGSDEKKKLREQLQNYIAENDFGQRIKNIVQVNPDYTLAQICQLIMTEYNQQNNGCMQKKSAARKDINKDSYQHYKMLLLVNLRKAFLEFIKENYAFVLKPYKHDLCDKADFVPDFAKYVKPYAGLISRVAGSSELQKWYIVSRFLSPAQANHMLGFLHSYKQYVWDIYRRASETGTEINHSIAEDKIAGVDITDVDAVIDLSVKLCGTISSEISDYFKDDEVYAEYISSYLDFEYDGGNYKDSLNRFCNSDAVNDQKVALYYDGEHPKLNRNIILSKLYGERRFLEKITDRVSRSDIVEYYKLKKETSQYQTKGIFDSEDEQKNIKKFQEMKNIVEFRDLMDYSEIADELQGQLINWIYLRERDLMNFQLGYHYACLNNDSNKQATYVTLDYQGKKNRKINGAILYQICAMYINGLPLYYVDKDSSEWTVSDGKESTGAKIGEFYRYAKSFENTSDCYASGLEIFENISEHDNITELRNYIEHFRYYSSFDRSFLGIYSEVFDRFFTYDLKYRKNVPTILYNILLQHFVNVRFEFVSGKKMIGIDKKDRKIAKEKECARITIREKNGVYSEQFTYKLKNGTVYVDARDKRYLQSIIRLLFYPEKVNMDEMIEVKEKKKPSDNNTGKGYSKRDRQQDRKEYDKYKEKKKKEGNFLSGMGGNINWDEINAQLKN</sequence>
<dbReference type="EC" id="3.1.-.-"/>
<dbReference type="EMBL" id="ATWC01000054">
    <property type="status" value="NOT_ANNOTATED_CDS"/>
    <property type="molecule type" value="Genomic_DNA"/>
</dbReference>
<dbReference type="SMR" id="P0DPB7"/>
<dbReference type="OrthoDB" id="2014529at2"/>
<dbReference type="GO" id="GO:0004519">
    <property type="term" value="F:endonuclease activity"/>
    <property type="evidence" value="ECO:0007669"/>
    <property type="project" value="UniProtKB-KW"/>
</dbReference>
<dbReference type="GO" id="GO:0003723">
    <property type="term" value="F:RNA binding"/>
    <property type="evidence" value="ECO:0007669"/>
    <property type="project" value="UniProtKB-KW"/>
</dbReference>
<dbReference type="GO" id="GO:0051607">
    <property type="term" value="P:defense response to virus"/>
    <property type="evidence" value="ECO:0007669"/>
    <property type="project" value="UniProtKB-KW"/>
</dbReference>
<dbReference type="CDD" id="cd20790">
    <property type="entry name" value="Cas13a"/>
    <property type="match status" value="1"/>
</dbReference>
<dbReference type="InterPro" id="IPR053395">
    <property type="entry name" value="Cas13a_endoribonuclease"/>
</dbReference>
<dbReference type="NCBIfam" id="NF038188">
    <property type="entry name" value="cas13A_C2c2"/>
    <property type="match status" value="1"/>
</dbReference>
<reference key="1">
    <citation type="submission" date="2013-07" db="EMBL/GenBank/DDBJ databases">
        <authorList>
            <consortium name="US DOE Joint Genome Institute"/>
            <person name="Kelly W."/>
            <person name="Huntemann M."/>
            <person name="Han J."/>
            <person name="Chen A."/>
            <person name="Kyrpides N."/>
            <person name="Mavromatis K."/>
            <person name="Markowitz V."/>
            <person name="Palaniappan K."/>
            <person name="Ivanova N."/>
            <person name="Schaumberg A."/>
            <person name="Pati A."/>
            <person name="Liolios K."/>
            <person name="Nordberg H.P."/>
            <person name="Cantor M.N."/>
            <person name="Hua S.X."/>
            <person name="Woyke T."/>
        </authorList>
    </citation>
    <scope>NUCLEOTIDE SEQUENCE [LARGE SCALE MRNA]</scope>
    <source>
        <strain>NK4A179</strain>
    </source>
</reference>
<reference key="2">
    <citation type="journal article" date="2017" name="Mol. Cell">
        <title>RNA targeting by functionally orthogonal type VI-A CRISPR-Cas enzymes.</title>
        <authorList>
            <person name="East-Seletsky A."/>
            <person name="O'Connell M.R."/>
            <person name="Burstein D."/>
            <person name="Knott G.J."/>
            <person name="Doudna J.A."/>
        </authorList>
    </citation>
    <scope>FUNCTION IN CRRNA PROCESSING</scope>
    <scope>FUNCTION IN TARGET SSRNA CLEAVAGE</scope>
    <scope>FUNCTION AS AN ENDORIBONUCLEASE</scope>
    <scope>ACTIVITY REGULATION</scope>
</reference>
<evidence type="ECO:0000250" key="1">
    <source>
        <dbReference type="UniProtKB" id="C7NBY4"/>
    </source>
</evidence>
<evidence type="ECO:0000256" key="2">
    <source>
        <dbReference type="SAM" id="MobiDB-lite"/>
    </source>
</evidence>
<evidence type="ECO:0000269" key="3">
    <source>
    </source>
</evidence>
<evidence type="ECO:0000303" key="4">
    <source>
    </source>
</evidence>
<evidence type="ECO:0000305" key="5"/>
<evidence type="ECO:0000305" key="6">
    <source>
    </source>
</evidence>
<accession>P0DPB7</accession>
<feature type="chain" id="PRO_0000442268" description="CRISPR-associated endoribonuclease Cas13a">
    <location>
        <begin position="1"/>
        <end position="1437"/>
    </location>
</feature>
<feature type="region of interest" description="HEPN-like fold 1" evidence="1">
    <location>
        <begin position="460"/>
        <end position="626"/>
    </location>
</feature>
<feature type="region of interest" description="HEPN-like fold 2" evidence="1">
    <location>
        <begin position="1101"/>
        <end position="1437"/>
    </location>
</feature>
<feature type="region of interest" description="Disordered" evidence="2">
    <location>
        <begin position="1377"/>
        <end position="1419"/>
    </location>
</feature>
<feature type="compositionally biased region" description="Basic and acidic residues" evidence="2">
    <location>
        <begin position="1394"/>
        <end position="1416"/>
    </location>
</feature>
<keyword id="KW-0051">Antiviral defense</keyword>
<keyword id="KW-0255">Endonuclease</keyword>
<keyword id="KW-0378">Hydrolase</keyword>
<keyword id="KW-0540">Nuclease</keyword>
<keyword id="KW-0677">Repeat</keyword>
<keyword id="KW-0694">RNA-binding</keyword>
<comment type="function">
    <text evidence="3">CRISPR (clustered regularly interspaced short palindromic repeat), is an adaptive immune system that provides protection against mobile genetic elements (viruses, transposable elements and conjugative plasmids). CRISPR clusters contain sequences complementary to antecedent mobile elements and target invading nucleic acids. Unlike many single-component effectors, this CRISPR-Cas system targets RNA (PubMed:28475872). CRISPR clusters are transcribed from pre-CRISPR RNA (crRNA) and processed into crRNA by this protein (PubMed:28475872). Cleaves linear target ssRNA in a pre-crRNA-dependent fashion, preferentially around A residues (PubMed:28475872). Binding a viable target RNA target activates this protein for non-specific RNA degradation in vitro (called collateral RNA degradation), but it is not very sensitive as it requires nanomolar levels of viable target RNA (PubMed:28475872).</text>
</comment>
<comment type="cofactor">
    <cofactor evidence="1">
        <name>a divalent metal cation</name>
        <dbReference type="ChEBI" id="CHEBI:60240"/>
    </cofactor>
    <text evidence="1">Pre-crRNA processing is metal independent, while crRNA-guided target RNA cleavage is dependent on divalent metal.</text>
</comment>
<comment type="activity regulation">
    <text evidence="3">Target RNA acts as an activator for non-specific ssRNA degradation (PubMed:28475872).</text>
</comment>
<comment type="domain">
    <text evidence="1">The target ssRNase active sites are probably within the 2 HEPN-like folds, and the 2 folds interact in vivo.</text>
</comment>
<comment type="miscellaneous">
    <text evidence="6">Part of a type VI-A adenine-preferring CRISPR-Cas system.</text>
</comment>
<comment type="similarity">
    <text evidence="5">Belongs to the CRISPR-associated endoribonuclease Cas13a family.</text>
</comment>